<gene>
    <name type="primary">sop2</name>
    <name type="ordered locus">rrnAC0014</name>
</gene>
<feature type="chain" id="PRO_0000428853" description="Sensory rhodopsin II">
    <location>
        <begin position="1"/>
        <end position="236"/>
    </location>
</feature>
<feature type="transmembrane region" description="Helical" evidence="2">
    <location>
        <begin position="4"/>
        <end position="24"/>
    </location>
</feature>
<feature type="transmembrane region" description="Helical" evidence="2">
    <location>
        <begin position="38"/>
        <end position="58"/>
    </location>
</feature>
<feature type="transmembrane region" description="Helical" evidence="2">
    <location>
        <begin position="73"/>
        <end position="93"/>
    </location>
</feature>
<feature type="transmembrane region" description="Helical" evidence="2">
    <location>
        <begin position="101"/>
        <end position="121"/>
    </location>
</feature>
<feature type="transmembrane region" description="Helical" evidence="2">
    <location>
        <begin position="122"/>
        <end position="142"/>
    </location>
</feature>
<feature type="transmembrane region" description="Helical" evidence="2">
    <location>
        <begin position="167"/>
        <end position="187"/>
    </location>
</feature>
<feature type="transmembrane region" description="Helical" evidence="2">
    <location>
        <begin position="196"/>
        <end position="216"/>
    </location>
</feature>
<feature type="site" description="Primary proton acceptor" evidence="1">
    <location>
        <position position="75"/>
    </location>
</feature>
<feature type="modified residue" description="N6-(retinylidene)lysine" evidence="1">
    <location>
        <position position="206"/>
    </location>
</feature>
<evidence type="ECO:0000250" key="1"/>
<evidence type="ECO:0000255" key="2"/>
<evidence type="ECO:0000269" key="3">
    <source>
    </source>
</evidence>
<evidence type="ECO:0000305" key="4"/>
<protein>
    <recommendedName>
        <fullName>Sensory rhodopsin II</fullName>
        <shortName>HmSRII</shortName>
    </recommendedName>
</protein>
<organism>
    <name type="scientific">Haloarcula marismortui (strain ATCC 43049 / DSM 3752 / JCM 8966 / VKM B-1809)</name>
    <name type="common">Halobacterium marismortui</name>
    <dbReference type="NCBI Taxonomy" id="272569"/>
    <lineage>
        <taxon>Archaea</taxon>
        <taxon>Methanobacteriati</taxon>
        <taxon>Methanobacteriota</taxon>
        <taxon>Stenosarchaea group</taxon>
        <taxon>Halobacteria</taxon>
        <taxon>Halobacteriales</taxon>
        <taxon>Haloarculaceae</taxon>
        <taxon>Haloarcula</taxon>
    </lineage>
</organism>
<accession>Q5V5V3</accession>
<keyword id="KW-0157">Chromophore</keyword>
<keyword id="KW-0472">Membrane</keyword>
<keyword id="KW-0600">Photoreceptor protein</keyword>
<keyword id="KW-0675">Receptor</keyword>
<keyword id="KW-1185">Reference proteome</keyword>
<keyword id="KW-0681">Retinal protein</keyword>
<keyword id="KW-0716">Sensory transduction</keyword>
<keyword id="KW-0812">Transmembrane</keyword>
<keyword id="KW-1133">Transmembrane helix</keyword>
<name>BACS2_HALMA</name>
<sequence length="236" mass="25053">MATITTWFTLGLLGELLGTAVLAYGYTLVPEETRKRYLLLIAIPGIAIVAYALMALGFGSIQSEGHAVYVVRYVDWLLTTPLNVWFLALLAGASREDTVKLVVLQALTIVFGFAGAVTPSPVSYALFAVGGALFGGVIYLLYRNIAVAAKSTLSDIEVSLYRTLRNFVVVLWLVYPVVWLLGAAGVGLMDVETATLVVVYLDVVTKVGFGVIALLAMIDLGSAGETAEEPTAVAGD</sequence>
<comment type="function">
    <text evidence="3">Mediates the photorepellent response.</text>
</comment>
<comment type="biophysicochemical properties">
    <absorption>
        <max evidence="3">483 nm</max>
    </absorption>
</comment>
<comment type="subcellular location">
    <subcellularLocation>
        <location evidence="4">Membrane</location>
        <topology evidence="4">Multi-pass membrane protein</topology>
    </subcellularLocation>
</comment>
<comment type="induction">
    <text evidence="3">Expressed constitutively throughout the growth phases, both in presence and absence of white light.</text>
</comment>
<comment type="PTM">
    <text evidence="1">The covalent binding of retinal to the apoprotein, bacterioopsin, generates bacteriorhodopsin.</text>
</comment>
<comment type="similarity">
    <text evidence="4">Belongs to the archaeal/bacterial/fungal opsin family.</text>
</comment>
<reference key="1">
    <citation type="journal article" date="2004" name="Genome Res.">
        <title>Genome sequence of Haloarcula marismortui: a halophilic archaeon from the Dead Sea.</title>
        <authorList>
            <person name="Baliga N.S."/>
            <person name="Bonneau R."/>
            <person name="Facciotti M.T."/>
            <person name="Pan M."/>
            <person name="Glusman G."/>
            <person name="Deutsch E.W."/>
            <person name="Shannon P."/>
            <person name="Chiu Y."/>
            <person name="Weng R.S."/>
            <person name="Gan R.R."/>
            <person name="Hung P."/>
            <person name="Date S.V."/>
            <person name="Marcotte E."/>
            <person name="Hood L."/>
            <person name="Ng W.V."/>
        </authorList>
    </citation>
    <scope>NUCLEOTIDE SEQUENCE [LARGE SCALE GENOMIC DNA]</scope>
    <source>
        <strain>ATCC 43049 / DSM 3752 / JCM 8966 / VKM B-1809</strain>
    </source>
</reference>
<reference key="2">
    <citation type="journal article" date="2010" name="J. Bacteriol.">
        <title>A novel six-rhodopsin system in a single archaeon.</title>
        <authorList>
            <person name="Fu H.Y."/>
            <person name="Lin Y.C."/>
            <person name="Chang Y.N."/>
            <person name="Tseng H."/>
            <person name="Huang C.C."/>
            <person name="Liu K.C."/>
            <person name="Huang C.S."/>
            <person name="Su C.W."/>
            <person name="Weng R.R."/>
            <person name="Lee Y.Y."/>
            <person name="Ng W.V."/>
            <person name="Yang C.S."/>
        </authorList>
    </citation>
    <scope>FUNCTION</scope>
    <scope>INDUCTION</scope>
    <scope>CHARACTERIZATION</scope>
    <scope>BIOPHYSICOCHEMICAL PROPERTIES</scope>
</reference>
<dbReference type="EMBL" id="AY596297">
    <property type="protein sequence ID" value="AAV45099.1"/>
    <property type="molecule type" value="Genomic_DNA"/>
</dbReference>
<dbReference type="RefSeq" id="WP_011222779.1">
    <property type="nucleotide sequence ID" value="NC_006396.1"/>
</dbReference>
<dbReference type="SMR" id="Q5V5V3"/>
<dbReference type="STRING" id="272569.rrnAC0014"/>
<dbReference type="PaxDb" id="272569-rrnAC0014"/>
<dbReference type="EnsemblBacteria" id="AAV45099">
    <property type="protein sequence ID" value="AAV45099"/>
    <property type="gene ID" value="rrnAC0014"/>
</dbReference>
<dbReference type="GeneID" id="40154333"/>
<dbReference type="KEGG" id="hma:rrnAC0014"/>
<dbReference type="PATRIC" id="fig|272569.17.peg.828"/>
<dbReference type="eggNOG" id="arCOG02810">
    <property type="taxonomic scope" value="Archaea"/>
</dbReference>
<dbReference type="HOGENOM" id="CLU_054785_5_1_2"/>
<dbReference type="Proteomes" id="UP000001169">
    <property type="component" value="Chromosome I"/>
</dbReference>
<dbReference type="GO" id="GO:0016020">
    <property type="term" value="C:membrane"/>
    <property type="evidence" value="ECO:0007669"/>
    <property type="project" value="UniProtKB-SubCell"/>
</dbReference>
<dbReference type="GO" id="GO:0005216">
    <property type="term" value="F:monoatomic ion channel activity"/>
    <property type="evidence" value="ECO:0007669"/>
    <property type="project" value="InterPro"/>
</dbReference>
<dbReference type="GO" id="GO:0009881">
    <property type="term" value="F:photoreceptor activity"/>
    <property type="evidence" value="ECO:0007669"/>
    <property type="project" value="UniProtKB-KW"/>
</dbReference>
<dbReference type="GO" id="GO:0007602">
    <property type="term" value="P:phototransduction"/>
    <property type="evidence" value="ECO:0007669"/>
    <property type="project" value="UniProtKB-KW"/>
</dbReference>
<dbReference type="CDD" id="cd15029">
    <property type="entry name" value="7tm_SRI_SRII"/>
    <property type="match status" value="1"/>
</dbReference>
<dbReference type="Gene3D" id="1.20.1070.10">
    <property type="entry name" value="Rhodopsin 7-helix transmembrane proteins"/>
    <property type="match status" value="1"/>
</dbReference>
<dbReference type="InterPro" id="IPR001425">
    <property type="entry name" value="Arc/bac/fun_rhodopsins"/>
</dbReference>
<dbReference type="InterPro" id="IPR018229">
    <property type="entry name" value="Rhodopsin_retinal_BS"/>
</dbReference>
<dbReference type="PANTHER" id="PTHR28286">
    <property type="match status" value="1"/>
</dbReference>
<dbReference type="PANTHER" id="PTHR28286:SF2">
    <property type="entry name" value="BACTERIORHODOPSIN _OPSIN, NOPA (EUROFUNG)"/>
    <property type="match status" value="1"/>
</dbReference>
<dbReference type="Pfam" id="PF01036">
    <property type="entry name" value="Bac_rhodopsin"/>
    <property type="match status" value="1"/>
</dbReference>
<dbReference type="PRINTS" id="PR00251">
    <property type="entry name" value="BACTRLOPSIN"/>
</dbReference>
<dbReference type="SMART" id="SM01021">
    <property type="entry name" value="Bac_rhodopsin"/>
    <property type="match status" value="1"/>
</dbReference>
<dbReference type="SUPFAM" id="SSF81321">
    <property type="entry name" value="Family A G protein-coupled receptor-like"/>
    <property type="match status" value="1"/>
</dbReference>
<dbReference type="PROSITE" id="PS00950">
    <property type="entry name" value="BACTERIAL_OPSIN_1"/>
    <property type="match status" value="1"/>
</dbReference>
<dbReference type="PROSITE" id="PS00327">
    <property type="entry name" value="BACTERIAL_OPSIN_RET"/>
    <property type="match status" value="1"/>
</dbReference>
<proteinExistence type="evidence at protein level"/>